<keyword id="KW-0028">Amino-acid biosynthesis</keyword>
<keyword id="KW-0198">Cysteine biosynthesis</keyword>
<keyword id="KW-0614">Plasmid</keyword>
<keyword id="KW-0663">Pyridoxal phosphate</keyword>
<keyword id="KW-1185">Reference proteome</keyword>
<keyword id="KW-0808">Transferase</keyword>
<name>Y4XP_SINFN</name>
<sequence length="336" mass="35415">MLHTTVTQLIGQTPVMSIDVPGRNATLVLKIEKNNPGGSMKDRMARSMVIAALQDGRLPPGGTIVESSSGNTGTGLALAALEFGLRFIAVVDHHAAPDKIRMMRALGAEIRYVEGDFREDEVAVVERQRLAAQLGAQLPGALFMNQSDNPANPEGYTGLVDELVAQLPDGIDAFVGCVGTGGSMTGISQRLKRNNPAVRTIAVEPAGSIVFGKPGHPYYQSGTGTPAGDEVGKVLDYGCIDEGVQVTDTQAFETARYIARRKGLLVGGSTGGAIYKALEFIGAGKLTGTVVTTVADGGEKYLGTIFDEEWMAKRRLLDPAIAAQLDGWLFGKARAA</sequence>
<proteinExistence type="inferred from homology"/>
<gene>
    <name type="ordered locus">NGR_a00730</name>
    <name type="ORF">y4xP</name>
</gene>
<organism>
    <name type="scientific">Sinorhizobium fredii (strain NBRC 101917 / NGR234)</name>
    <dbReference type="NCBI Taxonomy" id="394"/>
    <lineage>
        <taxon>Bacteria</taxon>
        <taxon>Pseudomonadati</taxon>
        <taxon>Pseudomonadota</taxon>
        <taxon>Alphaproteobacteria</taxon>
        <taxon>Hyphomicrobiales</taxon>
        <taxon>Rhizobiaceae</taxon>
        <taxon>Sinorhizobium/Ensifer group</taxon>
        <taxon>Sinorhizobium</taxon>
    </lineage>
</organism>
<reference key="1">
    <citation type="journal article" date="1997" name="Nature">
        <title>Molecular basis of symbiosis between Rhizobium and legumes.</title>
        <authorList>
            <person name="Freiberg C.A."/>
            <person name="Fellay R."/>
            <person name="Bairoch A."/>
            <person name="Broughton W.J."/>
            <person name="Rosenthal A."/>
            <person name="Perret X."/>
        </authorList>
    </citation>
    <scope>NUCLEOTIDE SEQUENCE [LARGE SCALE GENOMIC DNA]</scope>
    <source>
        <strain>NBRC 101917 / NGR234</strain>
    </source>
</reference>
<reference key="2">
    <citation type="journal article" date="2009" name="Appl. Environ. Microbiol.">
        <title>Rhizobium sp. strain NGR234 possesses a remarkable number of secretion systems.</title>
        <authorList>
            <person name="Schmeisser C."/>
            <person name="Liesegang H."/>
            <person name="Krysciak D."/>
            <person name="Bakkou N."/>
            <person name="Le Quere A."/>
            <person name="Wollherr A."/>
            <person name="Heinemeyer I."/>
            <person name="Morgenstern B."/>
            <person name="Pommerening-Roeser A."/>
            <person name="Flores M."/>
            <person name="Palacios R."/>
            <person name="Brenner S."/>
            <person name="Gottschalk G."/>
            <person name="Schmitz R.A."/>
            <person name="Broughton W.J."/>
            <person name="Perret X."/>
            <person name="Strittmatter A.W."/>
            <person name="Streit W.R."/>
        </authorList>
    </citation>
    <scope>NUCLEOTIDE SEQUENCE [LARGE SCALE GENOMIC DNA]</scope>
    <source>
        <strain>NBRC 101917 / NGR234</strain>
    </source>
</reference>
<comment type="function">
    <text>As it is highly similar to bacterial and plant cysteine synthases, it is possible that it catalyzes a related reaction.</text>
</comment>
<comment type="catalytic activity">
    <reaction>
        <text>O-acetyl-L-serine + hydrogen sulfide = L-cysteine + acetate</text>
        <dbReference type="Rhea" id="RHEA:14829"/>
        <dbReference type="ChEBI" id="CHEBI:29919"/>
        <dbReference type="ChEBI" id="CHEBI:30089"/>
        <dbReference type="ChEBI" id="CHEBI:35235"/>
        <dbReference type="ChEBI" id="CHEBI:58340"/>
        <dbReference type="EC" id="2.5.1.47"/>
    </reaction>
</comment>
<comment type="cofactor">
    <cofactor>
        <name>pyridoxal 5'-phosphate</name>
        <dbReference type="ChEBI" id="CHEBI:597326"/>
    </cofactor>
</comment>
<comment type="similarity">
    <text evidence="2">Belongs to the cysteine synthase/cystathionine beta-synthase family.</text>
</comment>
<dbReference type="EC" id="2.5.1.47"/>
<dbReference type="EMBL" id="U00090">
    <property type="protein sequence ID" value="AAB91939.1"/>
    <property type="molecule type" value="Genomic_DNA"/>
</dbReference>
<dbReference type="RefSeq" id="NP_444152.1">
    <property type="nucleotide sequence ID" value="NC_000914.2"/>
</dbReference>
<dbReference type="RefSeq" id="WP_010875114.1">
    <property type="nucleotide sequence ID" value="NC_000914.2"/>
</dbReference>
<dbReference type="SMR" id="P55708"/>
<dbReference type="KEGG" id="rhi:NGR_a00730"/>
<dbReference type="PATRIC" id="fig|394.7.peg.65"/>
<dbReference type="eggNOG" id="COG0031">
    <property type="taxonomic scope" value="Bacteria"/>
</dbReference>
<dbReference type="HOGENOM" id="CLU_021018_1_0_5"/>
<dbReference type="OrthoDB" id="9805733at2"/>
<dbReference type="Proteomes" id="UP000001054">
    <property type="component" value="Plasmid pNGR234a"/>
</dbReference>
<dbReference type="GO" id="GO:0004124">
    <property type="term" value="F:cysteine synthase activity"/>
    <property type="evidence" value="ECO:0007669"/>
    <property type="project" value="UniProtKB-EC"/>
</dbReference>
<dbReference type="GO" id="GO:0006535">
    <property type="term" value="P:cysteine biosynthetic process from serine"/>
    <property type="evidence" value="ECO:0007669"/>
    <property type="project" value="InterPro"/>
</dbReference>
<dbReference type="CDD" id="cd01561">
    <property type="entry name" value="CBS_like"/>
    <property type="match status" value="1"/>
</dbReference>
<dbReference type="Gene3D" id="3.40.50.1100">
    <property type="match status" value="2"/>
</dbReference>
<dbReference type="InterPro" id="IPR050214">
    <property type="entry name" value="Cys_Synth/Cystath_Beta-Synth"/>
</dbReference>
<dbReference type="InterPro" id="IPR001216">
    <property type="entry name" value="P-phosphate_BS"/>
</dbReference>
<dbReference type="InterPro" id="IPR001926">
    <property type="entry name" value="TrpB-like_PALP"/>
</dbReference>
<dbReference type="InterPro" id="IPR036052">
    <property type="entry name" value="TrpB-like_PALP_sf"/>
</dbReference>
<dbReference type="PANTHER" id="PTHR10314">
    <property type="entry name" value="CYSTATHIONINE BETA-SYNTHASE"/>
    <property type="match status" value="1"/>
</dbReference>
<dbReference type="Pfam" id="PF00291">
    <property type="entry name" value="PALP"/>
    <property type="match status" value="1"/>
</dbReference>
<dbReference type="SUPFAM" id="SSF53686">
    <property type="entry name" value="Tryptophan synthase beta subunit-like PLP-dependent enzymes"/>
    <property type="match status" value="1"/>
</dbReference>
<dbReference type="PROSITE" id="PS00901">
    <property type="entry name" value="CYS_SYNTHASE"/>
    <property type="match status" value="1"/>
</dbReference>
<evidence type="ECO:0000250" key="1"/>
<evidence type="ECO:0000305" key="2"/>
<feature type="chain" id="PRO_0000167136" description="Putative cysteine synthase">
    <location>
        <begin position="1"/>
        <end position="336"/>
    </location>
</feature>
<feature type="binding site" evidence="1">
    <location>
        <position position="71"/>
    </location>
    <ligand>
        <name>pyridoxal 5'-phosphate</name>
        <dbReference type="ChEBI" id="CHEBI:597326"/>
    </ligand>
</feature>
<feature type="binding site" evidence="1">
    <location>
        <begin position="179"/>
        <end position="183"/>
    </location>
    <ligand>
        <name>pyridoxal 5'-phosphate</name>
        <dbReference type="ChEBI" id="CHEBI:597326"/>
    </ligand>
</feature>
<feature type="binding site" evidence="1">
    <location>
        <position position="269"/>
    </location>
    <ligand>
        <name>pyridoxal 5'-phosphate</name>
        <dbReference type="ChEBI" id="CHEBI:597326"/>
    </ligand>
</feature>
<feature type="modified residue" description="N6-(pyridoxal phosphate)lysine" evidence="1">
    <location>
        <position position="41"/>
    </location>
</feature>
<geneLocation type="plasmid">
    <name>sym pNGR234a</name>
</geneLocation>
<accession>P55708</accession>
<protein>
    <recommendedName>
        <fullName>Putative cysteine synthase</fullName>
        <ecNumber>2.5.1.47</ecNumber>
    </recommendedName>
    <alternativeName>
        <fullName>O-acetylserine (Thiol)-lyase</fullName>
    </alternativeName>
    <alternativeName>
        <fullName>O-acetylserine sulfhydrylase</fullName>
        <shortName>CSase</shortName>
    </alternativeName>
</protein>